<gene>
    <name type="ORF">AFUA_5G14880</name>
</gene>
<proteinExistence type="evidence at transcript level"/>
<keyword id="KW-0130">Cell adhesion</keyword>
<keyword id="KW-1185">Reference proteome</keyword>
<keyword id="KW-0843">Virulence</keyword>
<dbReference type="EMBL" id="AAHF01000003">
    <property type="protein sequence ID" value="EAL91131.1"/>
    <property type="molecule type" value="Genomic_DNA"/>
</dbReference>
<dbReference type="RefSeq" id="XP_753169.1">
    <property type="nucleotide sequence ID" value="XM_748076.1"/>
</dbReference>
<dbReference type="FunCoup" id="Q4WW95">
    <property type="interactions" value="15"/>
</dbReference>
<dbReference type="EnsemblFungi" id="EAL91131">
    <property type="protein sequence ID" value="EAL91131"/>
    <property type="gene ID" value="AFUA_5G14880"/>
</dbReference>
<dbReference type="GeneID" id="3510952"/>
<dbReference type="KEGG" id="afm:AFUA_5G14880"/>
<dbReference type="VEuPathDB" id="FungiDB:Afu5g14880"/>
<dbReference type="eggNOG" id="ENOG502RS4B">
    <property type="taxonomic scope" value="Eukaryota"/>
</dbReference>
<dbReference type="HOGENOM" id="CLU_019189_9_1_1"/>
<dbReference type="InParanoid" id="Q4WW95"/>
<dbReference type="OMA" id="CEHDSSQ"/>
<dbReference type="OrthoDB" id="10003767at2759"/>
<dbReference type="Proteomes" id="UP000002530">
    <property type="component" value="Chromosome 5"/>
</dbReference>
<dbReference type="GO" id="GO:0007155">
    <property type="term" value="P:cell adhesion"/>
    <property type="evidence" value="ECO:0007669"/>
    <property type="project" value="UniProtKB-KW"/>
</dbReference>
<dbReference type="CDD" id="cd05120">
    <property type="entry name" value="APH_ChoK_like"/>
    <property type="match status" value="1"/>
</dbReference>
<dbReference type="Gene3D" id="3.90.1200.10">
    <property type="match status" value="1"/>
</dbReference>
<dbReference type="Gene3D" id="3.30.200.20">
    <property type="entry name" value="Phosphorylase Kinase, domain 1"/>
    <property type="match status" value="1"/>
</dbReference>
<dbReference type="InterPro" id="IPR002575">
    <property type="entry name" value="Aminoglycoside_PTrfase"/>
</dbReference>
<dbReference type="InterPro" id="IPR011009">
    <property type="entry name" value="Kinase-like_dom_sf"/>
</dbReference>
<dbReference type="InterPro" id="IPR051035">
    <property type="entry name" value="Mito_inheritance_9"/>
</dbReference>
<dbReference type="PANTHER" id="PTHR36091">
    <property type="entry name" value="ALTERED INHERITANCE OF MITOCHONDRIA PROTEIN 9, MITOCHONDRIAL"/>
    <property type="match status" value="1"/>
</dbReference>
<dbReference type="PANTHER" id="PTHR36091:SF2">
    <property type="entry name" value="AMINOGLYCOSIDE PHOSPHOTRANSFERASE DOMAIN-CONTAINING PROTEIN"/>
    <property type="match status" value="1"/>
</dbReference>
<dbReference type="Pfam" id="PF01636">
    <property type="entry name" value="APH"/>
    <property type="match status" value="1"/>
</dbReference>
<dbReference type="SUPFAM" id="SSF56112">
    <property type="entry name" value="Protein kinase-like (PK-like)"/>
    <property type="match status" value="1"/>
</dbReference>
<organism>
    <name type="scientific">Aspergillus fumigatus (strain ATCC MYA-4609 / CBS 101355 / FGSC A1100 / Af293)</name>
    <name type="common">Neosartorya fumigata</name>
    <dbReference type="NCBI Taxonomy" id="330879"/>
    <lineage>
        <taxon>Eukaryota</taxon>
        <taxon>Fungi</taxon>
        <taxon>Dikarya</taxon>
        <taxon>Ascomycota</taxon>
        <taxon>Pezizomycotina</taxon>
        <taxon>Eurotiomycetes</taxon>
        <taxon>Eurotiomycetidae</taxon>
        <taxon>Eurotiales</taxon>
        <taxon>Aspergillaceae</taxon>
        <taxon>Aspergillus</taxon>
        <taxon>Aspergillus subgen. Fumigati</taxon>
    </lineage>
</organism>
<protein>
    <recommendedName>
        <fullName evidence="2">Subtelomeric hrmA-associated cluster protein AFUA_5G14880</fullName>
    </recommendedName>
</protein>
<sequence length="509" mass="57562">MQQDYCPDIAKLAEGGFNKVFILRAKNGREVIARIPTPIAGPAHYTTASEVATMDFLRAVLKLPVPEVFAYSTTSENPVGAEYILMERVEGESLSSRWLSLTTDEVKDIMIQIAEMERKIFDFRFPAYGSLYHTKDLDWKHQIPIVEDFVIGPVSSREFWHGERSKTEIDRGPCRVSPLSTFPFILGFLEKEPTGTGLIIAVGLSPLDCVTSAARREMAVIQRHAKPQPRQTFLLPTNYNIHPSEHTSLLSQFLQVAPHLIRPGSYSAPTLRHPDLSLSNILLAPGTSKIISIIDWQGATILPRFMQAGYPAFCHHDSSQPQSLEIPSLPDDFDKMGIDEQRQIKAIFRLEEANLYYTAATGVHNEEHMNVLKIPHLGMQQYLLRQTGYPWDADVINLRAALVGITTPSVWSKISSAACPVEFSEEEREAAIAESQEWNESEQLLSRVREHLNIDLEGGTEPDNFERAVEGNRQLRIEMVRQAEAGQQEICWRNWPYKDQEDNSMPPQR</sequence>
<evidence type="ECO:0000269" key="1">
    <source>
    </source>
</evidence>
<evidence type="ECO:0000303" key="2">
    <source>
    </source>
</evidence>
<name>HAC3_ASPFU</name>
<feature type="chain" id="PRO_0000460419" description="Subtelomeric hrmA-associated cluster protein AFUA_5G14880">
    <location>
        <begin position="1"/>
        <end position="509"/>
    </location>
</feature>
<comment type="function">
    <text evidence="1">Part of the subtelomeric hrmA-associated cluster (HAC) containing genes that alter the hyphal surface (such as reduced total chitin or increased beta-glucan exposure) and perturb inter-hyphal interactions within the developing biofilms, resulting in a loss of vertically aligned polarized growing filaments (PubMed:31548684). Consequently, this hypoxia-typic morphotype (called H-MORPH) with altered biofilm architecture leads to increased hypoxia fitness, increased host inflammation, rapid disease progression, and mortality in a murine model of invasive aspergillosis (PubMed:31548684).</text>
</comment>
<comment type="induction">
    <text evidence="1">Expression is regulated by the hypoxia responsive morphology factor A (hrmA).</text>
</comment>
<accession>Q4WW95</accession>
<reference key="1">
    <citation type="journal article" date="2005" name="Nature">
        <title>Genomic sequence of the pathogenic and allergenic filamentous fungus Aspergillus fumigatus.</title>
        <authorList>
            <person name="Nierman W.C."/>
            <person name="Pain A."/>
            <person name="Anderson M.J."/>
            <person name="Wortman J.R."/>
            <person name="Kim H.S."/>
            <person name="Arroyo J."/>
            <person name="Berriman M."/>
            <person name="Abe K."/>
            <person name="Archer D.B."/>
            <person name="Bermejo C."/>
            <person name="Bennett J.W."/>
            <person name="Bowyer P."/>
            <person name="Chen D."/>
            <person name="Collins M."/>
            <person name="Coulsen R."/>
            <person name="Davies R."/>
            <person name="Dyer P.S."/>
            <person name="Farman M.L."/>
            <person name="Fedorova N."/>
            <person name="Fedorova N.D."/>
            <person name="Feldblyum T.V."/>
            <person name="Fischer R."/>
            <person name="Fosker N."/>
            <person name="Fraser A."/>
            <person name="Garcia J.L."/>
            <person name="Garcia M.J."/>
            <person name="Goble A."/>
            <person name="Goldman G.H."/>
            <person name="Gomi K."/>
            <person name="Griffith-Jones S."/>
            <person name="Gwilliam R."/>
            <person name="Haas B.J."/>
            <person name="Haas H."/>
            <person name="Harris D.E."/>
            <person name="Horiuchi H."/>
            <person name="Huang J."/>
            <person name="Humphray S."/>
            <person name="Jimenez J."/>
            <person name="Keller N."/>
            <person name="Khouri H."/>
            <person name="Kitamoto K."/>
            <person name="Kobayashi T."/>
            <person name="Konzack S."/>
            <person name="Kulkarni R."/>
            <person name="Kumagai T."/>
            <person name="Lafton A."/>
            <person name="Latge J.-P."/>
            <person name="Li W."/>
            <person name="Lord A."/>
            <person name="Lu C."/>
            <person name="Majoros W.H."/>
            <person name="May G.S."/>
            <person name="Miller B.L."/>
            <person name="Mohamoud Y."/>
            <person name="Molina M."/>
            <person name="Monod M."/>
            <person name="Mouyna I."/>
            <person name="Mulligan S."/>
            <person name="Murphy L.D."/>
            <person name="O'Neil S."/>
            <person name="Paulsen I."/>
            <person name="Penalva M.A."/>
            <person name="Pertea M."/>
            <person name="Price C."/>
            <person name="Pritchard B.L."/>
            <person name="Quail M.A."/>
            <person name="Rabbinowitsch E."/>
            <person name="Rawlins N."/>
            <person name="Rajandream M.A."/>
            <person name="Reichard U."/>
            <person name="Renauld H."/>
            <person name="Robson G.D."/>
            <person name="Rodriguez de Cordoba S."/>
            <person name="Rodriguez-Pena J.M."/>
            <person name="Ronning C.M."/>
            <person name="Rutter S."/>
            <person name="Salzberg S.L."/>
            <person name="Sanchez M."/>
            <person name="Sanchez-Ferrero J.C."/>
            <person name="Saunders D."/>
            <person name="Seeger K."/>
            <person name="Squares R."/>
            <person name="Squares S."/>
            <person name="Takeuchi M."/>
            <person name="Tekaia F."/>
            <person name="Turner G."/>
            <person name="Vazquez de Aldana C.R."/>
            <person name="Weidman J."/>
            <person name="White O."/>
            <person name="Woodward J.R."/>
            <person name="Yu J.-H."/>
            <person name="Fraser C.M."/>
            <person name="Galagan J.E."/>
            <person name="Asai K."/>
            <person name="Machida M."/>
            <person name="Hall N."/>
            <person name="Barrell B.G."/>
            <person name="Denning D.W."/>
        </authorList>
    </citation>
    <scope>NUCLEOTIDE SEQUENCE [LARGE SCALE GENOMIC DNA]</scope>
    <source>
        <strain>ATCC MYA-4609 / CBS 101355 / FGSC A1100 / Af293</strain>
    </source>
</reference>
<reference key="2">
    <citation type="journal article" date="2019" name="Nat. Microbiol.">
        <title>Fungal biofilm morphology impacts hypoxia fitness and disease progression.</title>
        <authorList>
            <person name="Kowalski C.H."/>
            <person name="Kerkaert J.D."/>
            <person name="Liu K.W."/>
            <person name="Bond M.C."/>
            <person name="Hartmann R."/>
            <person name="Nadell C.D."/>
            <person name="Stajich J.E."/>
            <person name="Cramer R.A."/>
        </authorList>
    </citation>
    <scope>FUNCTION</scope>
    <scope>INDUCTION</scope>
</reference>